<evidence type="ECO:0000255" key="1">
    <source>
        <dbReference type="HAMAP-Rule" id="MF_00378"/>
    </source>
</evidence>
<accession>B9E101</accession>
<organism>
    <name type="scientific">Clostridium kluyveri (strain NBRC 12016)</name>
    <dbReference type="NCBI Taxonomy" id="583346"/>
    <lineage>
        <taxon>Bacteria</taxon>
        <taxon>Bacillati</taxon>
        <taxon>Bacillota</taxon>
        <taxon>Clostridia</taxon>
        <taxon>Eubacteriales</taxon>
        <taxon>Clostridiaceae</taxon>
        <taxon>Clostridium</taxon>
    </lineage>
</organism>
<keyword id="KW-0963">Cytoplasm</keyword>
<keyword id="KW-0269">Exonuclease</keyword>
<keyword id="KW-0378">Hydrolase</keyword>
<keyword id="KW-0540">Nuclease</keyword>
<comment type="function">
    <text evidence="1">Bidirectionally degrades single-stranded DNA into large acid-insoluble oligonucleotides, which are then degraded further into small acid-soluble oligonucleotides.</text>
</comment>
<comment type="catalytic activity">
    <reaction evidence="1">
        <text>Exonucleolytic cleavage in either 5'- to 3'- or 3'- to 5'-direction to yield nucleoside 5'-phosphates.</text>
        <dbReference type="EC" id="3.1.11.6"/>
    </reaction>
</comment>
<comment type="subunit">
    <text evidence="1">Heterooligomer composed of large and small subunits.</text>
</comment>
<comment type="subcellular location">
    <subcellularLocation>
        <location evidence="1">Cytoplasm</location>
    </subcellularLocation>
</comment>
<comment type="similarity">
    <text evidence="1">Belongs to the XseA family.</text>
</comment>
<proteinExistence type="inferred from homology"/>
<sequence length="400" mass="45366">MYIKTLTVSDINRYIKKTLDNDFILGNCSVKGEVSNFKFHSSGHMYFSLKDKFSKINCIMFKSSVEKLNFMPGDGMKVIVKGRISLYEKEGVYQLYCSEMKPDGMGELYLAFEKLKIELEKKGLFDISHKKKIPLYAKKIGVITSPTGAAVKDIINVTRRRNKKIELLIYPSLVQGTGASDNIIKGIETFNSMEDVELIIIARGGGSIEELWCFNDEKLAEAVYSSKKPIITGVGHEIDYTIVDFVSDMRAPTPSAAAEIGVFSLEEYVQKILNYKNKLYNSVKNTVNDKKNRLAFVKKTLEVNNPLTYIANEYENIDKIKESLNFKIKVIINGKKEKLGKINALLSAHNPLNILNKGYCIIEDEQKNVISSIEELNKKYKVDIIMKDGTSKVELIHYKK</sequence>
<name>EX7L_CLOK1</name>
<feature type="chain" id="PRO_1000200667" description="Exodeoxyribonuclease 7 large subunit">
    <location>
        <begin position="1"/>
        <end position="400"/>
    </location>
</feature>
<dbReference type="EC" id="3.1.11.6" evidence="1"/>
<dbReference type="EMBL" id="AP009049">
    <property type="protein sequence ID" value="BAH06176.1"/>
    <property type="molecule type" value="Genomic_DNA"/>
</dbReference>
<dbReference type="RefSeq" id="WP_012101611.1">
    <property type="nucleotide sequence ID" value="NC_011837.1"/>
</dbReference>
<dbReference type="SMR" id="B9E101"/>
<dbReference type="KEGG" id="ckr:CKR_1125"/>
<dbReference type="HOGENOM" id="CLU_023625_2_0_9"/>
<dbReference type="Proteomes" id="UP000007969">
    <property type="component" value="Chromosome"/>
</dbReference>
<dbReference type="GO" id="GO:0005737">
    <property type="term" value="C:cytoplasm"/>
    <property type="evidence" value="ECO:0007669"/>
    <property type="project" value="UniProtKB-SubCell"/>
</dbReference>
<dbReference type="GO" id="GO:0009318">
    <property type="term" value="C:exodeoxyribonuclease VII complex"/>
    <property type="evidence" value="ECO:0007669"/>
    <property type="project" value="InterPro"/>
</dbReference>
<dbReference type="GO" id="GO:0008855">
    <property type="term" value="F:exodeoxyribonuclease VII activity"/>
    <property type="evidence" value="ECO:0007669"/>
    <property type="project" value="UniProtKB-UniRule"/>
</dbReference>
<dbReference type="GO" id="GO:0003676">
    <property type="term" value="F:nucleic acid binding"/>
    <property type="evidence" value="ECO:0007669"/>
    <property type="project" value="InterPro"/>
</dbReference>
<dbReference type="GO" id="GO:0006308">
    <property type="term" value="P:DNA catabolic process"/>
    <property type="evidence" value="ECO:0007669"/>
    <property type="project" value="UniProtKB-UniRule"/>
</dbReference>
<dbReference type="CDD" id="cd04489">
    <property type="entry name" value="ExoVII_LU_OBF"/>
    <property type="match status" value="1"/>
</dbReference>
<dbReference type="HAMAP" id="MF_00378">
    <property type="entry name" value="Exonuc_7_L"/>
    <property type="match status" value="1"/>
</dbReference>
<dbReference type="InterPro" id="IPR003753">
    <property type="entry name" value="Exonuc_VII_L"/>
</dbReference>
<dbReference type="InterPro" id="IPR020579">
    <property type="entry name" value="Exonuc_VII_lsu_C"/>
</dbReference>
<dbReference type="InterPro" id="IPR025824">
    <property type="entry name" value="OB-fold_nuc-bd_dom"/>
</dbReference>
<dbReference type="NCBIfam" id="TIGR00237">
    <property type="entry name" value="xseA"/>
    <property type="match status" value="1"/>
</dbReference>
<dbReference type="PANTHER" id="PTHR30008">
    <property type="entry name" value="EXODEOXYRIBONUCLEASE 7 LARGE SUBUNIT"/>
    <property type="match status" value="1"/>
</dbReference>
<dbReference type="PANTHER" id="PTHR30008:SF0">
    <property type="entry name" value="EXODEOXYRIBONUCLEASE 7 LARGE SUBUNIT"/>
    <property type="match status" value="1"/>
</dbReference>
<dbReference type="Pfam" id="PF02601">
    <property type="entry name" value="Exonuc_VII_L"/>
    <property type="match status" value="2"/>
</dbReference>
<dbReference type="Pfam" id="PF13742">
    <property type="entry name" value="tRNA_anti_2"/>
    <property type="match status" value="1"/>
</dbReference>
<gene>
    <name evidence="1" type="primary">xseA</name>
    <name type="ordered locus">CKR_1125</name>
</gene>
<reference key="1">
    <citation type="submission" date="2005-09" db="EMBL/GenBank/DDBJ databases">
        <title>Complete genome sequence of Clostridium kluyveri and comparative genomics of Clostridia species.</title>
        <authorList>
            <person name="Inui M."/>
            <person name="Nonaka H."/>
            <person name="Shinoda Y."/>
            <person name="Ikenaga Y."/>
            <person name="Abe M."/>
            <person name="Naito K."/>
            <person name="Vertes A.A."/>
            <person name="Yukawa H."/>
        </authorList>
    </citation>
    <scope>NUCLEOTIDE SEQUENCE [LARGE SCALE GENOMIC DNA]</scope>
    <source>
        <strain>NBRC 12016</strain>
    </source>
</reference>
<protein>
    <recommendedName>
        <fullName evidence="1">Exodeoxyribonuclease 7 large subunit</fullName>
        <ecNumber evidence="1">3.1.11.6</ecNumber>
    </recommendedName>
    <alternativeName>
        <fullName evidence="1">Exodeoxyribonuclease VII large subunit</fullName>
        <shortName evidence="1">Exonuclease VII large subunit</shortName>
    </alternativeName>
</protein>